<reference key="1">
    <citation type="journal article" date="2007" name="Microbiology">
        <title>Comparative analysis of the Corynebacterium glutamicum group and complete genome sequence of strain R.</title>
        <authorList>
            <person name="Yukawa H."/>
            <person name="Omumasaba C.A."/>
            <person name="Nonaka H."/>
            <person name="Kos P."/>
            <person name="Okai N."/>
            <person name="Suzuki N."/>
            <person name="Suda M."/>
            <person name="Tsuge Y."/>
            <person name="Watanabe J."/>
            <person name="Ikeda Y."/>
            <person name="Vertes A.A."/>
            <person name="Inui M."/>
        </authorList>
    </citation>
    <scope>NUCLEOTIDE SEQUENCE [LARGE SCALE GENOMIC DNA]</scope>
    <source>
        <strain>R</strain>
    </source>
</reference>
<feature type="chain" id="PRO_1000011132" description="Phosphopantetheine adenylyltransferase">
    <location>
        <begin position="1"/>
        <end position="160"/>
    </location>
</feature>
<feature type="binding site" evidence="1">
    <location>
        <begin position="8"/>
        <end position="9"/>
    </location>
    <ligand>
        <name>ATP</name>
        <dbReference type="ChEBI" id="CHEBI:30616"/>
    </ligand>
</feature>
<feature type="binding site" evidence="1">
    <location>
        <position position="8"/>
    </location>
    <ligand>
        <name>substrate</name>
    </ligand>
</feature>
<feature type="binding site" evidence="1">
    <location>
        <position position="16"/>
    </location>
    <ligand>
        <name>ATP</name>
        <dbReference type="ChEBI" id="CHEBI:30616"/>
    </ligand>
</feature>
<feature type="binding site" evidence="1">
    <location>
        <position position="40"/>
    </location>
    <ligand>
        <name>substrate</name>
    </ligand>
</feature>
<feature type="binding site" evidence="1">
    <location>
        <position position="73"/>
    </location>
    <ligand>
        <name>substrate</name>
    </ligand>
</feature>
<feature type="binding site" evidence="1">
    <location>
        <position position="87"/>
    </location>
    <ligand>
        <name>substrate</name>
    </ligand>
</feature>
<feature type="binding site" evidence="1">
    <location>
        <begin position="88"/>
        <end position="90"/>
    </location>
    <ligand>
        <name>ATP</name>
        <dbReference type="ChEBI" id="CHEBI:30616"/>
    </ligand>
</feature>
<feature type="binding site" evidence="1">
    <location>
        <position position="98"/>
    </location>
    <ligand>
        <name>ATP</name>
        <dbReference type="ChEBI" id="CHEBI:30616"/>
    </ligand>
</feature>
<feature type="binding site" evidence="1">
    <location>
        <begin position="122"/>
        <end position="128"/>
    </location>
    <ligand>
        <name>ATP</name>
        <dbReference type="ChEBI" id="CHEBI:30616"/>
    </ligand>
</feature>
<feature type="site" description="Transition state stabilizer" evidence="1">
    <location>
        <position position="16"/>
    </location>
</feature>
<protein>
    <recommendedName>
        <fullName evidence="1">Phosphopantetheine adenylyltransferase</fullName>
        <ecNumber evidence="1">2.7.7.3</ecNumber>
    </recommendedName>
    <alternativeName>
        <fullName evidence="1">Dephospho-CoA pyrophosphorylase</fullName>
    </alternativeName>
    <alternativeName>
        <fullName evidence="1">Pantetheine-phosphate adenylyltransferase</fullName>
        <shortName evidence="1">PPAT</shortName>
    </alternativeName>
</protein>
<name>COAD_CORGB</name>
<accession>A4QDU2</accession>
<evidence type="ECO:0000255" key="1">
    <source>
        <dbReference type="HAMAP-Rule" id="MF_00151"/>
    </source>
</evidence>
<comment type="function">
    <text evidence="1">Reversibly transfers an adenylyl group from ATP to 4'-phosphopantetheine, yielding dephospho-CoA (dPCoA) and pyrophosphate.</text>
</comment>
<comment type="catalytic activity">
    <reaction evidence="1">
        <text>(R)-4'-phosphopantetheine + ATP + H(+) = 3'-dephospho-CoA + diphosphate</text>
        <dbReference type="Rhea" id="RHEA:19801"/>
        <dbReference type="ChEBI" id="CHEBI:15378"/>
        <dbReference type="ChEBI" id="CHEBI:30616"/>
        <dbReference type="ChEBI" id="CHEBI:33019"/>
        <dbReference type="ChEBI" id="CHEBI:57328"/>
        <dbReference type="ChEBI" id="CHEBI:61723"/>
        <dbReference type="EC" id="2.7.7.3"/>
    </reaction>
</comment>
<comment type="cofactor">
    <cofactor evidence="1">
        <name>Mg(2+)</name>
        <dbReference type="ChEBI" id="CHEBI:18420"/>
    </cofactor>
</comment>
<comment type="pathway">
    <text evidence="1">Cofactor biosynthesis; coenzyme A biosynthesis; CoA from (R)-pantothenate: step 4/5.</text>
</comment>
<comment type="subunit">
    <text evidence="1">Homohexamer.</text>
</comment>
<comment type="subcellular location">
    <subcellularLocation>
        <location evidence="1">Cytoplasm</location>
    </subcellularLocation>
</comment>
<comment type="similarity">
    <text evidence="1">Belongs to the bacterial CoaD family.</text>
</comment>
<organism>
    <name type="scientific">Corynebacterium glutamicum (strain R)</name>
    <dbReference type="NCBI Taxonomy" id="340322"/>
    <lineage>
        <taxon>Bacteria</taxon>
        <taxon>Bacillati</taxon>
        <taxon>Actinomycetota</taxon>
        <taxon>Actinomycetes</taxon>
        <taxon>Mycobacteriales</taxon>
        <taxon>Corynebacteriaceae</taxon>
        <taxon>Corynebacterium</taxon>
    </lineage>
</organism>
<dbReference type="EC" id="2.7.7.3" evidence="1"/>
<dbReference type="EMBL" id="AP009044">
    <property type="protein sequence ID" value="BAF54389.1"/>
    <property type="molecule type" value="Genomic_DNA"/>
</dbReference>
<dbReference type="RefSeq" id="WP_003858828.1">
    <property type="nucleotide sequence ID" value="NC_009342.1"/>
</dbReference>
<dbReference type="SMR" id="A4QDU2"/>
<dbReference type="GeneID" id="1019305"/>
<dbReference type="KEGG" id="cgt:cgR_1403"/>
<dbReference type="HOGENOM" id="CLU_100149_1_0_11"/>
<dbReference type="PhylomeDB" id="A4QDU2"/>
<dbReference type="UniPathway" id="UPA00241">
    <property type="reaction ID" value="UER00355"/>
</dbReference>
<dbReference type="Proteomes" id="UP000006698">
    <property type="component" value="Chromosome"/>
</dbReference>
<dbReference type="GO" id="GO:0005737">
    <property type="term" value="C:cytoplasm"/>
    <property type="evidence" value="ECO:0007669"/>
    <property type="project" value="UniProtKB-SubCell"/>
</dbReference>
<dbReference type="GO" id="GO:0005524">
    <property type="term" value="F:ATP binding"/>
    <property type="evidence" value="ECO:0007669"/>
    <property type="project" value="UniProtKB-KW"/>
</dbReference>
<dbReference type="GO" id="GO:0004595">
    <property type="term" value="F:pantetheine-phosphate adenylyltransferase activity"/>
    <property type="evidence" value="ECO:0007669"/>
    <property type="project" value="UniProtKB-UniRule"/>
</dbReference>
<dbReference type="GO" id="GO:0015937">
    <property type="term" value="P:coenzyme A biosynthetic process"/>
    <property type="evidence" value="ECO:0007669"/>
    <property type="project" value="UniProtKB-UniRule"/>
</dbReference>
<dbReference type="CDD" id="cd02163">
    <property type="entry name" value="PPAT"/>
    <property type="match status" value="1"/>
</dbReference>
<dbReference type="Gene3D" id="3.40.50.620">
    <property type="entry name" value="HUPs"/>
    <property type="match status" value="1"/>
</dbReference>
<dbReference type="HAMAP" id="MF_00151">
    <property type="entry name" value="PPAT_bact"/>
    <property type="match status" value="1"/>
</dbReference>
<dbReference type="InterPro" id="IPR004821">
    <property type="entry name" value="Cyt_trans-like"/>
</dbReference>
<dbReference type="InterPro" id="IPR001980">
    <property type="entry name" value="PPAT"/>
</dbReference>
<dbReference type="InterPro" id="IPR014729">
    <property type="entry name" value="Rossmann-like_a/b/a_fold"/>
</dbReference>
<dbReference type="NCBIfam" id="TIGR01510">
    <property type="entry name" value="coaD_prev_kdtB"/>
    <property type="match status" value="1"/>
</dbReference>
<dbReference type="NCBIfam" id="TIGR00125">
    <property type="entry name" value="cyt_tran_rel"/>
    <property type="match status" value="1"/>
</dbReference>
<dbReference type="PANTHER" id="PTHR21342">
    <property type="entry name" value="PHOSPHOPANTETHEINE ADENYLYLTRANSFERASE"/>
    <property type="match status" value="1"/>
</dbReference>
<dbReference type="PANTHER" id="PTHR21342:SF1">
    <property type="entry name" value="PHOSPHOPANTETHEINE ADENYLYLTRANSFERASE"/>
    <property type="match status" value="1"/>
</dbReference>
<dbReference type="Pfam" id="PF01467">
    <property type="entry name" value="CTP_transf_like"/>
    <property type="match status" value="1"/>
</dbReference>
<dbReference type="PRINTS" id="PR01020">
    <property type="entry name" value="LPSBIOSNTHSS"/>
</dbReference>
<dbReference type="SUPFAM" id="SSF52374">
    <property type="entry name" value="Nucleotidylyl transferase"/>
    <property type="match status" value="1"/>
</dbReference>
<proteinExistence type="inferred from homology"/>
<sequence>MKAVCPGSFDPITLGHLDIVTRAAAQFSEVTILVTANPNKNSGLFTVAERMDLIRESTAHLDNVKVDTWASLLVDYTTEHGIGALVKGLRSSLDYEYELPMAQMNRRLTGVDTFFLLTDEKYGYVSSTLCKEVARFGGDVSGLLPEVVAKAVTEKYSNQH</sequence>
<gene>
    <name evidence="1" type="primary">coaD</name>
    <name type="ordered locus">cgR_1403</name>
</gene>
<keyword id="KW-0067">ATP-binding</keyword>
<keyword id="KW-0173">Coenzyme A biosynthesis</keyword>
<keyword id="KW-0963">Cytoplasm</keyword>
<keyword id="KW-0460">Magnesium</keyword>
<keyword id="KW-0547">Nucleotide-binding</keyword>
<keyword id="KW-0548">Nucleotidyltransferase</keyword>
<keyword id="KW-0808">Transferase</keyword>